<comment type="function">
    <text evidence="7 8 9 10">Functions in an early step of clathrin-mediated endocytosis. Has both a membrane binding/bending activity and the ability to recruit proteins essential to the formation of functional clathrin-coated pits. Has a lipid-binding activity with a preference for membranes enriched in phosphatidylserine and phosphoinositides (Pi(4,5) biphosphate) like the plasma membrane. Its membrane-bending activity might be important for the subsequent action of clathrin and adaptors in the formation of clathrin-coated vesicles. Involved in adaptor protein complex AP-2-dependent endocytosis of the transferrin receptor, it also functions in the AP-2-independent endocytosis of the LDL receptor.</text>
</comment>
<comment type="subunit">
    <text evidence="7 8 9 10 11">Homodimer; disulfide-linked. May form homotetramer. Interacts with AP2A1. Interacts with EPS15, EPS15R, ITSN1 and ITSN2; recruit those scaffolding proteins which in turn may interact with the adaptor protein complex AP-2 at the plasma membrane. Interacts with DAB2 (via DPF motifs); mediates LDL receptor/LDLR endocytosis.</text>
</comment>
<comment type="interaction">
    <interactant intactId="EBI-2609756">
        <id>Q0JRZ9</id>
    </interactant>
    <interactant intactId="EBI-396684">
        <id>P42566</id>
        <label>EPS15</label>
    </interactant>
    <organismsDiffer>false</organismsDiffer>
    <experiments>4</experiments>
</comment>
<comment type="interaction">
    <interactant intactId="EBI-2609756">
        <id>Q0JRZ9</id>
    </interactant>
    <interactant intactId="EBI-1391846">
        <id>P98078</id>
        <label>Dab2</label>
    </interactant>
    <organismsDiffer>true</organismsDiffer>
    <experiments>4</experiments>
</comment>
<comment type="interaction">
    <interactant intactId="EBI-15640469">
        <id>Q0JRZ9-1</id>
    </interactant>
    <interactant intactId="EBI-15640469">
        <id>Q0JRZ9-1</id>
        <label>FCHO2</label>
    </interactant>
    <organismsDiffer>false</organismsDiffer>
    <experiments>2</experiments>
</comment>
<comment type="subcellular location">
    <subcellularLocation>
        <location evidence="1">Membrane</location>
        <location evidence="1">Clathrin-coated pit</location>
        <topology evidence="1">Peripheral membrane protein</topology>
        <orientation evidence="1">Cytoplasmic side</orientation>
    </subcellularLocation>
    <text evidence="1">Associated with forming but not mature clathrin-coated vesicles. The recruitment to coated-pits precede the one of clathrin and the adaptor protein complex AP-2 (By similarity).</text>
</comment>
<comment type="alternative products">
    <event type="alternative splicing"/>
    <isoform>
        <id>Q0JRZ9-1</id>
        <name>1</name>
        <sequence type="displayed"/>
    </isoform>
    <isoform>
        <id>Q0JRZ9-2</id>
        <name>2</name>
        <sequence type="described" ref="VSP_021910 VSP_021911"/>
    </isoform>
    <isoform>
        <id>Q0JRZ9-3</id>
        <name>3</name>
        <sequence type="described" ref="VSP_044812"/>
    </isoform>
</comment>
<comment type="PTM">
    <text evidence="1">Ubiquitinated. Mainly undergoes monoubiquitination but also polyubiquitination (By similarity).</text>
</comment>
<comment type="miscellaneous">
    <text>Deforms liposomes into a range of tubule diameters from 20 to 130 nm in vitro.</text>
</comment>
<comment type="similarity">
    <text evidence="14">Belongs to the FCHO family.</text>
</comment>
<comment type="sequence caution" evidence="14">
    <conflict type="erroneous initiation">
        <sequence resource="EMBL-CDS" id="AAH14311"/>
    </conflict>
    <text>Extended N-terminus.</text>
</comment>
<name>FCHO2_HUMAN</name>
<organism>
    <name type="scientific">Homo sapiens</name>
    <name type="common">Human</name>
    <dbReference type="NCBI Taxonomy" id="9606"/>
    <lineage>
        <taxon>Eukaryota</taxon>
        <taxon>Metazoa</taxon>
        <taxon>Chordata</taxon>
        <taxon>Craniata</taxon>
        <taxon>Vertebrata</taxon>
        <taxon>Euteleostomi</taxon>
        <taxon>Mammalia</taxon>
        <taxon>Eutheria</taxon>
        <taxon>Euarchontoglires</taxon>
        <taxon>Primates</taxon>
        <taxon>Haplorrhini</taxon>
        <taxon>Catarrhini</taxon>
        <taxon>Hominidae</taxon>
        <taxon>Homo</taxon>
    </lineage>
</organism>
<proteinExistence type="evidence at protein level"/>
<keyword id="KW-0002">3D-structure</keyword>
<keyword id="KW-0025">Alternative splicing</keyword>
<keyword id="KW-0168">Coated pit</keyword>
<keyword id="KW-0175">Coiled coil</keyword>
<keyword id="KW-1015">Disulfide bond</keyword>
<keyword id="KW-0254">Endocytosis</keyword>
<keyword id="KW-1017">Isopeptide bond</keyword>
<keyword id="KW-0472">Membrane</keyword>
<keyword id="KW-0597">Phosphoprotein</keyword>
<keyword id="KW-1267">Proteomics identification</keyword>
<keyword id="KW-1185">Reference proteome</keyword>
<keyword id="KW-0832">Ubl conjugation</keyword>
<sequence length="810" mass="88924">MVMAYFVENFWGEKNSGFDVLYHNMKHGQISTKELADFVRERATIEEAYSRSMTKLAKSASNYSQLGTFAPVWDVFKTSTEKLANCHLDLVRKLQELIKEVQKYGEEQVKSHKKTKEEVAGTLEAVQTIQSITQALQKSKENYNAKCVEQERLKKEGATQREIEKAAVKSKKATDTYKLYVEKYALAKADFEQKMTETAQKFQDIEETHLIHIKEIIGSLSNAIKEIHLQIGQVHEEFINNMANTTVESLIQKFAESKGTGKERPGLIEFEECDTASAVEGIKPRKRKTFALPGIIKKEKDAESVECPDADSLNIPDVDEEGYSIKPETNQNDTKENHFYSSSDSDSEDEEPKKYRIEIKPMHPNNSHHTMASLDELKVSIGNITLSPAISRHSPVQMNRNLSNEELTKSKPSAPPNEKGTSDLLAWDPLFGPSLDSSSSSSLTSSSSARPTTPLSVGTIVPPPRPASRPKLTSGKLSGINEIPRPFSPPVTSNTSPPPAAPLARAESSSSISSSASLSAANTPTVGVSRGPSPVSLGNQDTLPVAVALTESVNAYFKGADPTKCIVKITGDMTMSFPSGIIKVFTSNPTPAVLCFRVKNISRLEQILPNAQLVFSDPSQCDSNTKDFWMNMQAVTVYLKKLSEQNPAASYYNVDVLKYQVSSNGIQSTPLNLATYWKCSASTTDLRVDYKYNPEAMVAPSVLSNIQVVVPVDGGVTNMQSLPPAIWNAEQMKAFWKLSSISEKSENGGSGSLRAKFDLSEGPSKPTTLAVQFLSEGSTLSGVDFELVGTGYRLSLIKKRFATGRYLADC</sequence>
<protein>
    <recommendedName>
        <fullName>F-BAR domain only protein 2</fullName>
    </recommendedName>
</protein>
<reference key="1">
    <citation type="journal article" date="2004" name="Nat. Genet.">
        <title>Complete sequencing and characterization of 21,243 full-length human cDNAs.</title>
        <authorList>
            <person name="Ota T."/>
            <person name="Suzuki Y."/>
            <person name="Nishikawa T."/>
            <person name="Otsuki T."/>
            <person name="Sugiyama T."/>
            <person name="Irie R."/>
            <person name="Wakamatsu A."/>
            <person name="Hayashi K."/>
            <person name="Sato H."/>
            <person name="Nagai K."/>
            <person name="Kimura K."/>
            <person name="Makita H."/>
            <person name="Sekine M."/>
            <person name="Obayashi M."/>
            <person name="Nishi T."/>
            <person name="Shibahara T."/>
            <person name="Tanaka T."/>
            <person name="Ishii S."/>
            <person name="Yamamoto J."/>
            <person name="Saito K."/>
            <person name="Kawai Y."/>
            <person name="Isono Y."/>
            <person name="Nakamura Y."/>
            <person name="Nagahari K."/>
            <person name="Murakami K."/>
            <person name="Yasuda T."/>
            <person name="Iwayanagi T."/>
            <person name="Wagatsuma M."/>
            <person name="Shiratori A."/>
            <person name="Sudo H."/>
            <person name="Hosoiri T."/>
            <person name="Kaku Y."/>
            <person name="Kodaira H."/>
            <person name="Kondo H."/>
            <person name="Sugawara M."/>
            <person name="Takahashi M."/>
            <person name="Kanda K."/>
            <person name="Yokoi T."/>
            <person name="Furuya T."/>
            <person name="Kikkawa E."/>
            <person name="Omura Y."/>
            <person name="Abe K."/>
            <person name="Kamihara K."/>
            <person name="Katsuta N."/>
            <person name="Sato K."/>
            <person name="Tanikawa M."/>
            <person name="Yamazaki M."/>
            <person name="Ninomiya K."/>
            <person name="Ishibashi T."/>
            <person name="Yamashita H."/>
            <person name="Murakawa K."/>
            <person name="Fujimori K."/>
            <person name="Tanai H."/>
            <person name="Kimata M."/>
            <person name="Watanabe M."/>
            <person name="Hiraoka S."/>
            <person name="Chiba Y."/>
            <person name="Ishida S."/>
            <person name="Ono Y."/>
            <person name="Takiguchi S."/>
            <person name="Watanabe S."/>
            <person name="Yosida M."/>
            <person name="Hotuta T."/>
            <person name="Kusano J."/>
            <person name="Kanehori K."/>
            <person name="Takahashi-Fujii A."/>
            <person name="Hara H."/>
            <person name="Tanase T.-O."/>
            <person name="Nomura Y."/>
            <person name="Togiya S."/>
            <person name="Komai F."/>
            <person name="Hara R."/>
            <person name="Takeuchi K."/>
            <person name="Arita M."/>
            <person name="Imose N."/>
            <person name="Musashino K."/>
            <person name="Yuuki H."/>
            <person name="Oshima A."/>
            <person name="Sasaki N."/>
            <person name="Aotsuka S."/>
            <person name="Yoshikawa Y."/>
            <person name="Matsunawa H."/>
            <person name="Ichihara T."/>
            <person name="Shiohata N."/>
            <person name="Sano S."/>
            <person name="Moriya S."/>
            <person name="Momiyama H."/>
            <person name="Satoh N."/>
            <person name="Takami S."/>
            <person name="Terashima Y."/>
            <person name="Suzuki O."/>
            <person name="Nakagawa S."/>
            <person name="Senoh A."/>
            <person name="Mizoguchi H."/>
            <person name="Goto Y."/>
            <person name="Shimizu F."/>
            <person name="Wakebe H."/>
            <person name="Hishigaki H."/>
            <person name="Watanabe T."/>
            <person name="Sugiyama A."/>
            <person name="Takemoto M."/>
            <person name="Kawakami B."/>
            <person name="Yamazaki M."/>
            <person name="Watanabe K."/>
            <person name="Kumagai A."/>
            <person name="Itakura S."/>
            <person name="Fukuzumi Y."/>
            <person name="Fujimori Y."/>
            <person name="Komiyama M."/>
            <person name="Tashiro H."/>
            <person name="Tanigami A."/>
            <person name="Fujiwara T."/>
            <person name="Ono T."/>
            <person name="Yamada K."/>
            <person name="Fujii Y."/>
            <person name="Ozaki K."/>
            <person name="Hirao M."/>
            <person name="Ohmori Y."/>
            <person name="Kawabata A."/>
            <person name="Hikiji T."/>
            <person name="Kobatake N."/>
            <person name="Inagaki H."/>
            <person name="Ikema Y."/>
            <person name="Okamoto S."/>
            <person name="Okitani R."/>
            <person name="Kawakami T."/>
            <person name="Noguchi S."/>
            <person name="Itoh T."/>
            <person name="Shigeta K."/>
            <person name="Senba T."/>
            <person name="Matsumura K."/>
            <person name="Nakajima Y."/>
            <person name="Mizuno T."/>
            <person name="Morinaga M."/>
            <person name="Sasaki M."/>
            <person name="Togashi T."/>
            <person name="Oyama M."/>
            <person name="Hata H."/>
            <person name="Watanabe M."/>
            <person name="Komatsu T."/>
            <person name="Mizushima-Sugano J."/>
            <person name="Satoh T."/>
            <person name="Shirai Y."/>
            <person name="Takahashi Y."/>
            <person name="Nakagawa K."/>
            <person name="Okumura K."/>
            <person name="Nagase T."/>
            <person name="Nomura N."/>
            <person name="Kikuchi H."/>
            <person name="Masuho Y."/>
            <person name="Yamashita R."/>
            <person name="Nakai K."/>
            <person name="Yada T."/>
            <person name="Nakamura Y."/>
            <person name="Ohara O."/>
            <person name="Isogai T."/>
            <person name="Sugano S."/>
        </authorList>
    </citation>
    <scope>NUCLEOTIDE SEQUENCE [LARGE SCALE MRNA] (ISOFORMS 1 AND 3)</scope>
    <source>
        <tissue>Brain</tissue>
        <tissue>Placenta</tissue>
    </source>
</reference>
<reference key="2">
    <citation type="journal article" date="2007" name="BMC Genomics">
        <title>The full-ORF clone resource of the German cDNA consortium.</title>
        <authorList>
            <person name="Bechtel S."/>
            <person name="Rosenfelder H."/>
            <person name="Duda A."/>
            <person name="Schmidt C.P."/>
            <person name="Ernst U."/>
            <person name="Wellenreuther R."/>
            <person name="Mehrle A."/>
            <person name="Schuster C."/>
            <person name="Bahr A."/>
            <person name="Bloecker H."/>
            <person name="Heubner D."/>
            <person name="Hoerlein A."/>
            <person name="Michel G."/>
            <person name="Wedler H."/>
            <person name="Koehrer K."/>
            <person name="Ottenwaelder B."/>
            <person name="Poustka A."/>
            <person name="Wiemann S."/>
            <person name="Schupp I."/>
        </authorList>
    </citation>
    <scope>NUCLEOTIDE SEQUENCE [LARGE SCALE MRNA] (ISOFORM 1)</scope>
    <source>
        <tissue>Skeletal muscle</tissue>
    </source>
</reference>
<reference key="3">
    <citation type="journal article" date="2004" name="Nature">
        <title>The DNA sequence and comparative analysis of human chromosome 5.</title>
        <authorList>
            <person name="Schmutz J."/>
            <person name="Martin J."/>
            <person name="Terry A."/>
            <person name="Couronne O."/>
            <person name="Grimwood J."/>
            <person name="Lowry S."/>
            <person name="Gordon L.A."/>
            <person name="Scott D."/>
            <person name="Xie G."/>
            <person name="Huang W."/>
            <person name="Hellsten U."/>
            <person name="Tran-Gyamfi M."/>
            <person name="She X."/>
            <person name="Prabhakar S."/>
            <person name="Aerts A."/>
            <person name="Altherr M."/>
            <person name="Bajorek E."/>
            <person name="Black S."/>
            <person name="Branscomb E."/>
            <person name="Caoile C."/>
            <person name="Challacombe J.F."/>
            <person name="Chan Y.M."/>
            <person name="Denys M."/>
            <person name="Detter J.C."/>
            <person name="Escobar J."/>
            <person name="Flowers D."/>
            <person name="Fotopulos D."/>
            <person name="Glavina T."/>
            <person name="Gomez M."/>
            <person name="Gonzales E."/>
            <person name="Goodstein D."/>
            <person name="Grigoriev I."/>
            <person name="Groza M."/>
            <person name="Hammon N."/>
            <person name="Hawkins T."/>
            <person name="Haydu L."/>
            <person name="Israni S."/>
            <person name="Jett J."/>
            <person name="Kadner K."/>
            <person name="Kimball H."/>
            <person name="Kobayashi A."/>
            <person name="Lopez F."/>
            <person name="Lou Y."/>
            <person name="Martinez D."/>
            <person name="Medina C."/>
            <person name="Morgan J."/>
            <person name="Nandkeshwar R."/>
            <person name="Noonan J.P."/>
            <person name="Pitluck S."/>
            <person name="Pollard M."/>
            <person name="Predki P."/>
            <person name="Priest J."/>
            <person name="Ramirez L."/>
            <person name="Retterer J."/>
            <person name="Rodriguez A."/>
            <person name="Rogers S."/>
            <person name="Salamov A."/>
            <person name="Salazar A."/>
            <person name="Thayer N."/>
            <person name="Tice H."/>
            <person name="Tsai M."/>
            <person name="Ustaszewska A."/>
            <person name="Vo N."/>
            <person name="Wheeler J."/>
            <person name="Wu K."/>
            <person name="Yang J."/>
            <person name="Dickson M."/>
            <person name="Cheng J.-F."/>
            <person name="Eichler E.E."/>
            <person name="Olsen A."/>
            <person name="Pennacchio L.A."/>
            <person name="Rokhsar D.S."/>
            <person name="Richardson P."/>
            <person name="Lucas S.M."/>
            <person name="Myers R.M."/>
            <person name="Rubin E.M."/>
        </authorList>
    </citation>
    <scope>NUCLEOTIDE SEQUENCE [LARGE SCALE GENOMIC DNA]</scope>
</reference>
<reference key="4">
    <citation type="journal article" date="2004" name="Genome Res.">
        <title>The status, quality, and expansion of the NIH full-length cDNA project: the Mammalian Gene Collection (MGC).</title>
        <authorList>
            <consortium name="The MGC Project Team"/>
        </authorList>
    </citation>
    <scope>NUCLEOTIDE SEQUENCE [LARGE SCALE MRNA] (ISOFORMS 1 AND 2)</scope>
    <source>
        <tissue>Lung</tissue>
        <tissue>Urinary bladder</tissue>
    </source>
</reference>
<reference key="5">
    <citation type="journal article" date="2006" name="Cell">
        <title>Global, in vivo, and site-specific phosphorylation dynamics in signaling networks.</title>
        <authorList>
            <person name="Olsen J.V."/>
            <person name="Blagoev B."/>
            <person name="Gnad F."/>
            <person name="Macek B."/>
            <person name="Kumar C."/>
            <person name="Mortensen P."/>
            <person name="Mann M."/>
        </authorList>
    </citation>
    <scope>IDENTIFICATION BY MASS SPECTROMETRY [LARGE SCALE ANALYSIS]</scope>
    <source>
        <tissue>Cervix carcinoma</tissue>
    </source>
</reference>
<reference key="6">
    <citation type="journal article" date="2006" name="Nat. Biotechnol.">
        <title>A probability-based approach for high-throughput protein phosphorylation analysis and site localization.</title>
        <authorList>
            <person name="Beausoleil S.A."/>
            <person name="Villen J."/>
            <person name="Gerber S.A."/>
            <person name="Rush J."/>
            <person name="Gygi S.P."/>
        </authorList>
    </citation>
    <scope>PHOSPHORYLATION [LARGE SCALE ANALYSIS] AT SER-387 AND SER-403</scope>
    <scope>IDENTIFICATION BY MASS SPECTROMETRY [LARGE SCALE ANALYSIS]</scope>
    <source>
        <tissue>Cervix carcinoma</tissue>
    </source>
</reference>
<reference key="7">
    <citation type="journal article" date="2008" name="Proc. Natl. Acad. Sci. U.S.A.">
        <title>A quantitative atlas of mitotic phosphorylation.</title>
        <authorList>
            <person name="Dephoure N."/>
            <person name="Zhou C."/>
            <person name="Villen J."/>
            <person name="Beausoleil S.A."/>
            <person name="Bakalarski C.E."/>
            <person name="Elledge S.J."/>
            <person name="Gygi S.P."/>
        </authorList>
    </citation>
    <scope>PHOSPHORYLATION [LARGE SCALE ANALYSIS] AT SER-488 AND SER-511</scope>
    <scope>IDENTIFICATION BY MASS SPECTROMETRY [LARGE SCALE ANALYSIS]</scope>
    <source>
        <tissue>Cervix carcinoma</tissue>
    </source>
</reference>
<reference key="8">
    <citation type="journal article" date="2010" name="Sci. Signal.">
        <title>Quantitative phosphoproteomics reveals widespread full phosphorylation site occupancy during mitosis.</title>
        <authorList>
            <person name="Olsen J.V."/>
            <person name="Vermeulen M."/>
            <person name="Santamaria A."/>
            <person name="Kumar C."/>
            <person name="Miller M.L."/>
            <person name="Jensen L.J."/>
            <person name="Gnad F."/>
            <person name="Cox J."/>
            <person name="Jensen T.S."/>
            <person name="Nigg E.A."/>
            <person name="Brunak S."/>
            <person name="Mann M."/>
        </authorList>
    </citation>
    <scope>PHOSPHORYLATION [LARGE SCALE ANALYSIS] AT THR-385; SER-387; SER-394; SER-403; SER-488 AND SER-533</scope>
    <scope>IDENTIFICATION BY MASS SPECTROMETRY [LARGE SCALE ANALYSIS]</scope>
    <source>
        <tissue>Cervix carcinoma</tissue>
    </source>
</reference>
<reference key="9">
    <citation type="journal article" date="2010" name="Science">
        <title>FCHo proteins are nucleators of clathrin-mediated endocytosis.</title>
        <authorList>
            <person name="Henne W.M."/>
            <person name="Boucrot E."/>
            <person name="Meinecke M."/>
            <person name="Evergren E."/>
            <person name="Vallis Y."/>
            <person name="Mittal R."/>
            <person name="McMahon H.T."/>
        </authorList>
    </citation>
    <scope>FUNCTION IN CLATHRIN-COATED PITS NUCLEATION</scope>
    <scope>INTERACTION WITH EPS15; EPS15R; ITSN1 AND ITSN2</scope>
</reference>
<reference key="10">
    <citation type="journal article" date="2011" name="BMC Syst. Biol.">
        <title>Initial characterization of the human central proteome.</title>
        <authorList>
            <person name="Burkard T.R."/>
            <person name="Planyavsky M."/>
            <person name="Kaupe I."/>
            <person name="Breitwieser F.P."/>
            <person name="Buerckstuemmer T."/>
            <person name="Bennett K.L."/>
            <person name="Superti-Furga G."/>
            <person name="Colinge J."/>
        </authorList>
    </citation>
    <scope>IDENTIFICATION BY MASS SPECTROMETRY [LARGE SCALE ANALYSIS]</scope>
</reference>
<reference key="11">
    <citation type="journal article" date="2011" name="Genes Cells">
        <title>Characterization of the EFC/F-BAR domain protein, FCHO2.</title>
        <authorList>
            <person name="Uezu A."/>
            <person name="Umeda K."/>
            <person name="Tsujita K."/>
            <person name="Suetsugu S."/>
            <person name="Takenawa T."/>
            <person name="Nakanishi H."/>
        </authorList>
    </citation>
    <scope>FUNCTION IN CLATHRIN-MEDIATED ENDOCYTOSIS</scope>
    <scope>INTERACTION WITH EPS15 AND AP2A1</scope>
    <scope>SUBCELLULAR LOCATION</scope>
</reference>
<reference key="12">
    <citation type="journal article" date="2011" name="Sci. Signal.">
        <title>System-wide temporal characterization of the proteome and phosphoproteome of human embryonic stem cell differentiation.</title>
        <authorList>
            <person name="Rigbolt K.T."/>
            <person name="Prokhorova T.A."/>
            <person name="Akimov V."/>
            <person name="Henningsen J."/>
            <person name="Johansen P.T."/>
            <person name="Kratchmarova I."/>
            <person name="Kassem M."/>
            <person name="Mann M."/>
            <person name="Olsen J.V."/>
            <person name="Blagoev B."/>
        </authorList>
    </citation>
    <scope>PHOSPHORYLATION [LARGE SCALE ANALYSIS] AT SER-403</scope>
    <scope>IDENTIFICATION BY MASS SPECTROMETRY [LARGE SCALE ANALYSIS]</scope>
</reference>
<reference key="13">
    <citation type="journal article" date="2012" name="Mol. Biol. Cell">
        <title>FCH domain only-2 organizes clathrin-coated structures and interacts with Disabled-2 for low-density lipoprotein receptor endocytosis.</title>
        <authorList>
            <person name="Mulkearns E.E."/>
            <person name="Cooper J.A."/>
        </authorList>
    </citation>
    <scope>FUNCTION IN DAB2-MEDIATED ENDOCYTOSIS</scope>
    <scope>INTERACTION WITH DAB2</scope>
    <scope>SUBCELLULAR LOCATION</scope>
</reference>
<reference key="14">
    <citation type="journal article" date="2012" name="Nat. Cell Biol.">
        <title>Distinct and separable activities of the endocytic clathrin-coat components Fcho1/2 and AP-2 in developmental patterning.</title>
        <authorList>
            <person name="Umasankar P.K."/>
            <person name="Sanker S."/>
            <person name="Thieman J.R."/>
            <person name="Chakraborty S."/>
            <person name="Wendland B."/>
            <person name="Tsang M."/>
            <person name="Traub L.M."/>
        </authorList>
    </citation>
    <scope>LIPID-BINDING</scope>
    <scope>INTERACTION WITH DAB2; EPS15; EPS15R AND ITSN1</scope>
</reference>
<reference key="15">
    <citation type="journal article" date="2013" name="J. Proteome Res.">
        <title>Toward a comprehensive characterization of a human cancer cell phosphoproteome.</title>
        <authorList>
            <person name="Zhou H."/>
            <person name="Di Palma S."/>
            <person name="Preisinger C."/>
            <person name="Peng M."/>
            <person name="Polat A.N."/>
            <person name="Heck A.J."/>
            <person name="Mohammed S."/>
        </authorList>
    </citation>
    <scope>PHOSPHORYLATION [LARGE SCALE ANALYSIS] AT SER-387; SER-394; SER-403; SER-488; SER-496 AND SER-508</scope>
    <scope>IDENTIFICATION BY MASS SPECTROMETRY [LARGE SCALE ANALYSIS]</scope>
    <source>
        <tissue>Cervix carcinoma</tissue>
        <tissue>Erythroleukemia</tissue>
    </source>
</reference>
<reference key="16">
    <citation type="journal article" date="2014" name="J. Proteomics">
        <title>An enzyme assisted RP-RPLC approach for in-depth analysis of human liver phosphoproteome.</title>
        <authorList>
            <person name="Bian Y."/>
            <person name="Song C."/>
            <person name="Cheng K."/>
            <person name="Dong M."/>
            <person name="Wang F."/>
            <person name="Huang J."/>
            <person name="Sun D."/>
            <person name="Wang L."/>
            <person name="Ye M."/>
            <person name="Zou H."/>
        </authorList>
    </citation>
    <scope>PHOSPHORYLATION [LARGE SCALE ANALYSIS] AT SER-394</scope>
    <scope>IDENTIFICATION BY MASS SPECTROMETRY [LARGE SCALE ANALYSIS]</scope>
    <source>
        <tissue>Liver</tissue>
    </source>
</reference>
<reference key="17">
    <citation type="journal article" date="2017" name="Nat. Struct. Mol. Biol.">
        <title>Site-specific mapping of the human SUMO proteome reveals co-modification with phosphorylation.</title>
        <authorList>
            <person name="Hendriks I.A."/>
            <person name="Lyon D."/>
            <person name="Young C."/>
            <person name="Jensen L.J."/>
            <person name="Vertegaal A.C."/>
            <person name="Nielsen M.L."/>
        </authorList>
    </citation>
    <scope>SUMOYLATION [LARGE SCALE ANALYSIS] AT LYS-297</scope>
    <scope>IDENTIFICATION BY MASS SPECTROMETRY [LARGE SCALE ANALYSIS]</scope>
</reference>
<reference key="18">
    <citation type="journal article" date="2007" name="Structure">
        <title>Structure and analysis of FCHo2 F-BAR domain: a dimerizing and membrane recruitment module that effects membrane curvature.</title>
        <authorList>
            <person name="Henne W.M."/>
            <person name="Kent H.M."/>
            <person name="Ford M.G."/>
            <person name="Hegde B.G."/>
            <person name="Daumke O."/>
            <person name="Butler P.J."/>
            <person name="Mittal R."/>
            <person name="Langen R."/>
            <person name="Evans P.R."/>
            <person name="McMahon H.T."/>
        </authorList>
    </citation>
    <scope>X-RAY CRYSTALLOGRAPHY (2.3 ANGSTROMS) OF 3-274</scope>
    <scope>FUNCTION</scope>
    <scope>SUBUNIT</scope>
    <scope>DISULFIDE BOND</scope>
    <scope>MUTAGENESIS OF PHE-10</scope>
</reference>
<evidence type="ECO:0000250" key="1"/>
<evidence type="ECO:0000250" key="2">
    <source>
        <dbReference type="UniProtKB" id="Q3UQN2"/>
    </source>
</evidence>
<evidence type="ECO:0000255" key="3"/>
<evidence type="ECO:0000255" key="4">
    <source>
        <dbReference type="PROSITE-ProRule" id="PRU00404"/>
    </source>
</evidence>
<evidence type="ECO:0000255" key="5">
    <source>
        <dbReference type="PROSITE-ProRule" id="PRU01077"/>
    </source>
</evidence>
<evidence type="ECO:0000256" key="6">
    <source>
        <dbReference type="SAM" id="MobiDB-lite"/>
    </source>
</evidence>
<evidence type="ECO:0000269" key="7">
    <source>
    </source>
</evidence>
<evidence type="ECO:0000269" key="8">
    <source>
    </source>
</evidence>
<evidence type="ECO:0000269" key="9">
    <source>
    </source>
</evidence>
<evidence type="ECO:0000269" key="10">
    <source>
    </source>
</evidence>
<evidence type="ECO:0000269" key="11">
    <source>
    </source>
</evidence>
<evidence type="ECO:0000303" key="12">
    <source>
    </source>
</evidence>
<evidence type="ECO:0000303" key="13">
    <source>
    </source>
</evidence>
<evidence type="ECO:0000305" key="14"/>
<evidence type="ECO:0007744" key="15">
    <source>
    </source>
</evidence>
<evidence type="ECO:0007744" key="16">
    <source>
    </source>
</evidence>
<evidence type="ECO:0007744" key="17">
    <source>
    </source>
</evidence>
<evidence type="ECO:0007744" key="18">
    <source>
    </source>
</evidence>
<evidence type="ECO:0007744" key="19">
    <source>
    </source>
</evidence>
<evidence type="ECO:0007744" key="20">
    <source>
    </source>
</evidence>
<evidence type="ECO:0007744" key="21">
    <source>
    </source>
</evidence>
<evidence type="ECO:0007829" key="22">
    <source>
        <dbReference type="PDB" id="2V0O"/>
    </source>
</evidence>
<evidence type="ECO:0007829" key="23">
    <source>
        <dbReference type="PDB" id="7OI5"/>
    </source>
</evidence>
<accession>Q0JRZ9</accession>
<accession>A8K6W7</accession>
<accession>B2RNQ9</accession>
<accession>B4DHK0</accession>
<accession>E9PG79</accession>
<accession>Q0JTJ3</accession>
<accession>Q96CF5</accession>
<gene>
    <name type="primary">FCHO2</name>
</gene>
<dbReference type="EMBL" id="AK291782">
    <property type="protein sequence ID" value="BAF84471.1"/>
    <property type="molecule type" value="mRNA"/>
</dbReference>
<dbReference type="EMBL" id="AK295141">
    <property type="protein sequence ID" value="BAG58162.1"/>
    <property type="molecule type" value="mRNA"/>
</dbReference>
<dbReference type="EMBL" id="AL831971">
    <property type="status" value="NOT_ANNOTATED_CDS"/>
    <property type="molecule type" value="mRNA"/>
</dbReference>
<dbReference type="EMBL" id="AC008972">
    <property type="status" value="NOT_ANNOTATED_CDS"/>
    <property type="molecule type" value="Genomic_DNA"/>
</dbReference>
<dbReference type="EMBL" id="AC020893">
    <property type="status" value="NOT_ANNOTATED_CDS"/>
    <property type="molecule type" value="Genomic_DNA"/>
</dbReference>
<dbReference type="EMBL" id="AC020942">
    <property type="status" value="NOT_ANNOTATED_CDS"/>
    <property type="molecule type" value="Genomic_DNA"/>
</dbReference>
<dbReference type="EMBL" id="BC014311">
    <property type="protein sequence ID" value="AAH14311.1"/>
    <property type="status" value="ALT_INIT"/>
    <property type="molecule type" value="mRNA"/>
</dbReference>
<dbReference type="EMBL" id="BC137070">
    <property type="protein sequence ID" value="AAI37071.1"/>
    <property type="molecule type" value="mRNA"/>
</dbReference>
<dbReference type="CCDS" id="CCDS47230.1">
    <molecule id="Q0JRZ9-1"/>
</dbReference>
<dbReference type="CCDS" id="CCDS54868.1">
    <molecule id="Q0JRZ9-3"/>
</dbReference>
<dbReference type="RefSeq" id="NP_001139504.1">
    <molecule id="Q0JRZ9-3"/>
    <property type="nucleotide sequence ID" value="NM_001146032.2"/>
</dbReference>
<dbReference type="RefSeq" id="NP_620137.2">
    <molecule id="Q0JRZ9-1"/>
    <property type="nucleotide sequence ID" value="NM_138782.3"/>
</dbReference>
<dbReference type="PDB" id="2V0O">
    <property type="method" value="X-ray"/>
    <property type="resolution" value="2.30 A"/>
    <property type="chains" value="A/B/C=3-274"/>
</dbReference>
<dbReference type="PDB" id="7OG1">
    <property type="method" value="X-ray"/>
    <property type="resolution" value="3.25 A"/>
    <property type="chains" value="DDD/GGG=314-444"/>
</dbReference>
<dbReference type="PDB" id="7OHO">
    <property type="method" value="X-ray"/>
    <property type="resolution" value="2.88 A"/>
    <property type="chains" value="BBB=358-444"/>
</dbReference>
<dbReference type="PDB" id="7OHZ">
    <property type="method" value="X-ray"/>
    <property type="resolution" value="2.27 A"/>
    <property type="chains" value="A/B=316-351"/>
</dbReference>
<dbReference type="PDB" id="7OI5">
    <property type="method" value="X-ray"/>
    <property type="resolution" value="2.61 A"/>
    <property type="chains" value="B/D=316-351"/>
</dbReference>
<dbReference type="PDB" id="7OIQ">
    <property type="method" value="X-ray"/>
    <property type="resolution" value="1.85 A"/>
    <property type="chains" value="CCC/DDD=422-432"/>
</dbReference>
<dbReference type="PDB" id="7OIT">
    <property type="method" value="X-ray"/>
    <property type="resolution" value="1.65 A"/>
    <property type="chains" value="BBB=422-432"/>
</dbReference>
<dbReference type="PDBsum" id="2V0O"/>
<dbReference type="PDBsum" id="7OG1"/>
<dbReference type="PDBsum" id="7OHO"/>
<dbReference type="PDBsum" id="7OHZ"/>
<dbReference type="PDBsum" id="7OI5"/>
<dbReference type="PDBsum" id="7OIQ"/>
<dbReference type="PDBsum" id="7OIT"/>
<dbReference type="EMDB" id="EMD-14525"/>
<dbReference type="SMR" id="Q0JRZ9"/>
<dbReference type="BioGRID" id="125437">
    <property type="interactions" value="92"/>
</dbReference>
<dbReference type="DIP" id="DIP-29488N"/>
<dbReference type="FunCoup" id="Q0JRZ9">
    <property type="interactions" value="2928"/>
</dbReference>
<dbReference type="IntAct" id="Q0JRZ9">
    <property type="interactions" value="55"/>
</dbReference>
<dbReference type="MINT" id="Q0JRZ9"/>
<dbReference type="STRING" id="9606.ENSP00000393776"/>
<dbReference type="GlyGen" id="Q0JRZ9">
    <property type="glycosylation" value="6 sites, 1 O-linked glycan (5 sites)"/>
</dbReference>
<dbReference type="iPTMnet" id="Q0JRZ9"/>
<dbReference type="PhosphoSitePlus" id="Q0JRZ9"/>
<dbReference type="BioMuta" id="FCHO2"/>
<dbReference type="DMDM" id="119369487"/>
<dbReference type="jPOST" id="Q0JRZ9"/>
<dbReference type="MassIVE" id="Q0JRZ9"/>
<dbReference type="PaxDb" id="9606-ENSP00000393776"/>
<dbReference type="PeptideAtlas" id="Q0JRZ9"/>
<dbReference type="ProteomicsDB" id="20262"/>
<dbReference type="ProteomicsDB" id="58761">
    <molecule id="Q0JRZ9-1"/>
</dbReference>
<dbReference type="ProteomicsDB" id="58762">
    <molecule id="Q0JRZ9-2"/>
</dbReference>
<dbReference type="Pumba" id="Q0JRZ9"/>
<dbReference type="Antibodypedia" id="48744">
    <property type="antibodies" value="139 antibodies from 23 providers"/>
</dbReference>
<dbReference type="DNASU" id="115548"/>
<dbReference type="Ensembl" id="ENST00000430046.7">
    <molecule id="Q0JRZ9-1"/>
    <property type="protein sequence ID" value="ENSP00000393776.2"/>
    <property type="gene ID" value="ENSG00000157107.14"/>
</dbReference>
<dbReference type="Ensembl" id="ENST00000512348.5">
    <molecule id="Q0JRZ9-3"/>
    <property type="protein sequence ID" value="ENSP00000427296.1"/>
    <property type="gene ID" value="ENSG00000157107.14"/>
</dbReference>
<dbReference type="GeneID" id="115548"/>
<dbReference type="KEGG" id="hsa:115548"/>
<dbReference type="MANE-Select" id="ENST00000430046.7">
    <property type="protein sequence ID" value="ENSP00000393776.2"/>
    <property type="RefSeq nucleotide sequence ID" value="NM_138782.3"/>
    <property type="RefSeq protein sequence ID" value="NP_620137.2"/>
</dbReference>
<dbReference type="UCSC" id="uc003kcl.3">
    <molecule id="Q0JRZ9-1"/>
    <property type="organism name" value="human"/>
</dbReference>
<dbReference type="AGR" id="HGNC:25180"/>
<dbReference type="CTD" id="115548"/>
<dbReference type="DisGeNET" id="115548"/>
<dbReference type="GeneCards" id="FCHO2"/>
<dbReference type="HGNC" id="HGNC:25180">
    <property type="gene designation" value="FCHO2"/>
</dbReference>
<dbReference type="HPA" id="ENSG00000157107">
    <property type="expression patterns" value="Low tissue specificity"/>
</dbReference>
<dbReference type="MIM" id="613438">
    <property type="type" value="gene"/>
</dbReference>
<dbReference type="neXtProt" id="NX_Q0JRZ9"/>
<dbReference type="OpenTargets" id="ENSG00000157107"/>
<dbReference type="PharmGKB" id="PA134911830"/>
<dbReference type="VEuPathDB" id="HostDB:ENSG00000157107"/>
<dbReference type="eggNOG" id="KOG2398">
    <property type="taxonomic scope" value="Eukaryota"/>
</dbReference>
<dbReference type="GeneTree" id="ENSGT00940000157105"/>
<dbReference type="HOGENOM" id="CLU_007107_0_0_1"/>
<dbReference type="InParanoid" id="Q0JRZ9"/>
<dbReference type="OMA" id="NEYIHAW"/>
<dbReference type="OrthoDB" id="5593455at2759"/>
<dbReference type="PAN-GO" id="Q0JRZ9">
    <property type="GO annotations" value="7 GO annotations based on evolutionary models"/>
</dbReference>
<dbReference type="PhylomeDB" id="Q0JRZ9"/>
<dbReference type="TreeFam" id="TF328986"/>
<dbReference type="PathwayCommons" id="Q0JRZ9"/>
<dbReference type="Reactome" id="R-HSA-8856825">
    <property type="pathway name" value="Cargo recognition for clathrin-mediated endocytosis"/>
</dbReference>
<dbReference type="Reactome" id="R-HSA-8856828">
    <property type="pathway name" value="Clathrin-mediated endocytosis"/>
</dbReference>
<dbReference type="SignaLink" id="Q0JRZ9"/>
<dbReference type="SIGNOR" id="Q0JRZ9"/>
<dbReference type="BioGRID-ORCS" id="115548">
    <property type="hits" value="70 hits in 1170 CRISPR screens"/>
</dbReference>
<dbReference type="ChiTaRS" id="FCHO2">
    <property type="organism name" value="human"/>
</dbReference>
<dbReference type="EvolutionaryTrace" id="Q0JRZ9"/>
<dbReference type="GeneWiki" id="FCHO2"/>
<dbReference type="GenomeRNAi" id="115548"/>
<dbReference type="Pharos" id="Q0JRZ9">
    <property type="development level" value="Tbio"/>
</dbReference>
<dbReference type="PRO" id="PR:Q0JRZ9"/>
<dbReference type="Proteomes" id="UP000005640">
    <property type="component" value="Chromosome 5"/>
</dbReference>
<dbReference type="RNAct" id="Q0JRZ9">
    <property type="molecule type" value="protein"/>
</dbReference>
<dbReference type="Bgee" id="ENSG00000157107">
    <property type="expression patterns" value="Expressed in ileal mucosa and 189 other cell types or tissues"/>
</dbReference>
<dbReference type="ExpressionAtlas" id="Q0JRZ9">
    <property type="expression patterns" value="baseline and differential"/>
</dbReference>
<dbReference type="GO" id="GO:0005905">
    <property type="term" value="C:clathrin-coated pit"/>
    <property type="evidence" value="ECO:0000314"/>
    <property type="project" value="UniProtKB"/>
</dbReference>
<dbReference type="GO" id="GO:0030136">
    <property type="term" value="C:clathrin-coated vesicle"/>
    <property type="evidence" value="ECO:0000314"/>
    <property type="project" value="UniProtKB"/>
</dbReference>
<dbReference type="GO" id="GO:0005737">
    <property type="term" value="C:cytoplasm"/>
    <property type="evidence" value="ECO:0000318"/>
    <property type="project" value="GO_Central"/>
</dbReference>
<dbReference type="GO" id="GO:0005829">
    <property type="term" value="C:cytosol"/>
    <property type="evidence" value="ECO:0000304"/>
    <property type="project" value="Reactome"/>
</dbReference>
<dbReference type="GO" id="GO:0005886">
    <property type="term" value="C:plasma membrane"/>
    <property type="evidence" value="ECO:0000250"/>
    <property type="project" value="UniProtKB"/>
</dbReference>
<dbReference type="GO" id="GO:0098793">
    <property type="term" value="C:presynapse"/>
    <property type="evidence" value="ECO:0007669"/>
    <property type="project" value="GOC"/>
</dbReference>
<dbReference type="GO" id="GO:0042802">
    <property type="term" value="F:identical protein binding"/>
    <property type="evidence" value="ECO:0000353"/>
    <property type="project" value="IntAct"/>
</dbReference>
<dbReference type="GO" id="GO:0035091">
    <property type="term" value="F:phosphatidylinositol binding"/>
    <property type="evidence" value="ECO:0000250"/>
    <property type="project" value="UniProtKB"/>
</dbReference>
<dbReference type="GO" id="GO:0005546">
    <property type="term" value="F:phosphatidylinositol-4,5-bisphosphate binding"/>
    <property type="evidence" value="ECO:0000250"/>
    <property type="project" value="UniProtKB"/>
</dbReference>
<dbReference type="GO" id="GO:0001786">
    <property type="term" value="F:phosphatidylserine binding"/>
    <property type="evidence" value="ECO:0000250"/>
    <property type="project" value="UniProtKB"/>
</dbReference>
<dbReference type="GO" id="GO:0048268">
    <property type="term" value="P:clathrin coat assembly"/>
    <property type="evidence" value="ECO:0000315"/>
    <property type="project" value="UniProtKB"/>
</dbReference>
<dbReference type="GO" id="GO:0072583">
    <property type="term" value="P:clathrin-dependent endocytosis"/>
    <property type="evidence" value="ECO:0000315"/>
    <property type="project" value="UniProtKB"/>
</dbReference>
<dbReference type="GO" id="GO:0010324">
    <property type="term" value="P:membrane invagination"/>
    <property type="evidence" value="ECO:0000250"/>
    <property type="project" value="UniProtKB"/>
</dbReference>
<dbReference type="GO" id="GO:0072659">
    <property type="term" value="P:protein localization to plasma membrane"/>
    <property type="evidence" value="ECO:0000250"/>
    <property type="project" value="UniProtKB"/>
</dbReference>
<dbReference type="GO" id="GO:0048488">
    <property type="term" value="P:synaptic vesicle endocytosis"/>
    <property type="evidence" value="ECO:0000318"/>
    <property type="project" value="GO_Central"/>
</dbReference>
<dbReference type="CDD" id="cd07673">
    <property type="entry name" value="F-BAR_FCHO2"/>
    <property type="match status" value="1"/>
</dbReference>
<dbReference type="CDD" id="cd09267">
    <property type="entry name" value="FCHo2_MHD"/>
    <property type="match status" value="1"/>
</dbReference>
<dbReference type="DisProt" id="DP02303"/>
<dbReference type="FunFam" id="1.20.1270.60:FF:000016">
    <property type="entry name" value="FCH domain only protein 2"/>
    <property type="match status" value="1"/>
</dbReference>
<dbReference type="Gene3D" id="1.20.1270.60">
    <property type="entry name" value="Arfaptin homology (AH) domain/BAR domain"/>
    <property type="match status" value="1"/>
</dbReference>
<dbReference type="InterPro" id="IPR027267">
    <property type="entry name" value="AH/BAR_dom_sf"/>
</dbReference>
<dbReference type="InterPro" id="IPR031160">
    <property type="entry name" value="F_BAR"/>
</dbReference>
<dbReference type="InterPro" id="IPR001060">
    <property type="entry name" value="FCH_dom"/>
</dbReference>
<dbReference type="InterPro" id="IPR030122">
    <property type="entry name" value="FCHo2_F-BAR"/>
</dbReference>
<dbReference type="InterPro" id="IPR054713">
    <property type="entry name" value="GMIP/FCHO2-like_FCH"/>
</dbReference>
<dbReference type="InterPro" id="IPR028565">
    <property type="entry name" value="MHD"/>
</dbReference>
<dbReference type="InterPro" id="IPR018808">
    <property type="entry name" value="Muniscin_C"/>
</dbReference>
<dbReference type="PANTHER" id="PTHR23065:SF8">
    <property type="entry name" value="F-BAR DOMAIN ONLY PROTEIN 2"/>
    <property type="match status" value="1"/>
</dbReference>
<dbReference type="PANTHER" id="PTHR23065">
    <property type="entry name" value="PROLINE-SERINE-THREONINE PHOSPHATASE INTERACTING PROTEIN 1"/>
    <property type="match status" value="1"/>
</dbReference>
<dbReference type="Pfam" id="PF22699">
    <property type="entry name" value="GMIP-like_FCH"/>
    <property type="match status" value="1"/>
</dbReference>
<dbReference type="Pfam" id="PF10291">
    <property type="entry name" value="muHD"/>
    <property type="match status" value="1"/>
</dbReference>
<dbReference type="SMART" id="SM00055">
    <property type="entry name" value="FCH"/>
    <property type="match status" value="1"/>
</dbReference>
<dbReference type="SUPFAM" id="SSF103657">
    <property type="entry name" value="BAR/IMD domain-like"/>
    <property type="match status" value="1"/>
</dbReference>
<dbReference type="PROSITE" id="PS51741">
    <property type="entry name" value="F_BAR"/>
    <property type="match status" value="1"/>
</dbReference>
<dbReference type="PROSITE" id="PS51072">
    <property type="entry name" value="MHD"/>
    <property type="match status" value="1"/>
</dbReference>
<feature type="chain" id="PRO_0000266005" description="F-BAR domain only protein 2">
    <location>
        <begin position="1"/>
        <end position="810"/>
    </location>
</feature>
<feature type="domain" description="F-BAR" evidence="5">
    <location>
        <begin position="3"/>
        <end position="250"/>
    </location>
</feature>
<feature type="domain" description="MHD" evidence="4">
    <location>
        <begin position="542"/>
        <end position="809"/>
    </location>
</feature>
<feature type="region of interest" description="Mediates dimerization and binding to membranes enriched in Pi(4,5)-P2 and induces their tubulation">
    <location>
        <begin position="3"/>
        <end position="274"/>
    </location>
</feature>
<feature type="region of interest" description="Disordered" evidence="6">
    <location>
        <begin position="301"/>
        <end position="352"/>
    </location>
</feature>
<feature type="region of interest" description="Disordered" evidence="6">
    <location>
        <begin position="404"/>
        <end position="537"/>
    </location>
</feature>
<feature type="region of interest" description="Mediates interaction with DAB2, EPS15, EPS15R and ITSN1">
    <location>
        <begin position="521"/>
        <end position="810"/>
    </location>
</feature>
<feature type="coiled-coil region" evidence="3">
    <location>
        <begin position="87"/>
        <end position="156"/>
    </location>
</feature>
<feature type="compositionally biased region" description="Low complexity" evidence="6">
    <location>
        <begin position="433"/>
        <end position="456"/>
    </location>
</feature>
<feature type="compositionally biased region" description="Low complexity" evidence="6">
    <location>
        <begin position="502"/>
        <end position="521"/>
    </location>
</feature>
<feature type="modified residue" description="Phosphoserine" evidence="2">
    <location>
        <position position="312"/>
    </location>
</feature>
<feature type="modified residue" description="Phosphothreonine" evidence="17">
    <location>
        <position position="385"/>
    </location>
</feature>
<feature type="modified residue" description="Phosphoserine" evidence="15 17 19">
    <location>
        <position position="387"/>
    </location>
</feature>
<feature type="modified residue" description="Phosphoserine" evidence="17 19 20">
    <location>
        <position position="394"/>
    </location>
</feature>
<feature type="modified residue" description="Phosphoserine" evidence="15 17 18 19">
    <location>
        <position position="403"/>
    </location>
</feature>
<feature type="modified residue" description="Phosphoserine" evidence="16 17 19">
    <location>
        <position position="488"/>
    </location>
</feature>
<feature type="modified residue" description="Phosphoserine" evidence="2">
    <location>
        <position position="493"/>
    </location>
</feature>
<feature type="modified residue" description="Phosphoserine" evidence="19">
    <location>
        <position position="496"/>
    </location>
</feature>
<feature type="modified residue" description="Phosphoserine" evidence="19">
    <location>
        <position position="508"/>
    </location>
</feature>
<feature type="modified residue" description="Phosphoserine" evidence="2">
    <location>
        <position position="510"/>
    </location>
</feature>
<feature type="modified residue" description="Phosphoserine" evidence="16">
    <location>
        <position position="511"/>
    </location>
</feature>
<feature type="modified residue" description="Phosphoserine" evidence="17">
    <location>
        <position position="533"/>
    </location>
</feature>
<feature type="disulfide bond" description="Interchain (with C-273)" evidence="7">
    <location>
        <position position="147"/>
    </location>
</feature>
<feature type="disulfide bond" description="Interchain (with C-147)" evidence="7">
    <location>
        <position position="273"/>
    </location>
</feature>
<feature type="cross-link" description="Glycyl lysine isopeptide (Lys-Gly) (interchain with G-Cter in SUMO2)" evidence="21">
    <location>
        <position position="297"/>
    </location>
</feature>
<feature type="splice variant" id="VSP_044812" description="In isoform 3." evidence="12">
    <location>
        <begin position="200"/>
        <end position="232"/>
    </location>
</feature>
<feature type="splice variant" id="VSP_021910" description="In isoform 2." evidence="13">
    <original>ECPDADSLNIPDVDEEGYSIKPETNQNDTKENHFYSSSDSDSEDEEPKKYRIEIKPMHPNNSHHTMAS</original>
    <variation>WSFTVVAQVGMQWRDLGLLHSPPPRFKRFSSYLSLPSSWNYGAHHHIWLIFCIFSRDRVSPYWPGWSRTP</variation>
    <location>
        <begin position="306"/>
        <end position="373"/>
    </location>
</feature>
<feature type="splice variant" id="VSP_021911" description="In isoform 2." evidence="13">
    <location>
        <begin position="374"/>
        <end position="810"/>
    </location>
</feature>
<feature type="sequence variant" id="VAR_029636" description="In dbSNP:rs185435.">
    <original>M</original>
    <variation>V</variation>
    <location>
        <position position="371"/>
    </location>
</feature>
<feature type="mutagenesis site" description="Binds preferentially to larger liposomes." evidence="7">
    <original>F</original>
    <variation>E</variation>
    <location>
        <position position="10"/>
    </location>
</feature>
<feature type="sequence conflict" description="In Ref. 2; AL831971." evidence="14" ref="2">
    <original>F</original>
    <variation>L</variation>
    <location>
        <position position="6"/>
    </location>
</feature>
<feature type="sequence conflict" description="In Ref. 1; BAG58162." evidence="14" ref="1">
    <original>K</original>
    <variation>E</variation>
    <location>
        <position position="286"/>
    </location>
</feature>
<feature type="sequence conflict" description="In Ref. 1; BAF84471." evidence="14" ref="1">
    <original>S</original>
    <variation>P</variation>
    <location>
        <position position="439"/>
    </location>
</feature>
<feature type="sequence conflict" description="In Ref. 2; AL831971." evidence="14" ref="2">
    <original>P</original>
    <variation>Q</variation>
    <location>
        <position position="462"/>
    </location>
</feature>
<feature type="sequence conflict" description="In Ref. 1; BAG58162." evidence="14" ref="1">
    <original>D</original>
    <variation>Y</variation>
    <location>
        <position position="617"/>
    </location>
</feature>
<feature type="helix" evidence="22">
    <location>
        <begin position="5"/>
        <end position="9"/>
    </location>
</feature>
<feature type="helix" evidence="22">
    <location>
        <begin position="17"/>
        <end position="61"/>
    </location>
</feature>
<feature type="strand" evidence="22">
    <location>
        <begin position="67"/>
        <end position="69"/>
    </location>
</feature>
<feature type="helix" evidence="22">
    <location>
        <begin position="70"/>
        <end position="72"/>
    </location>
</feature>
<feature type="helix" evidence="22">
    <location>
        <begin position="73"/>
        <end position="118"/>
    </location>
</feature>
<feature type="helix" evidence="22">
    <location>
        <begin position="120"/>
        <end position="156"/>
    </location>
</feature>
<feature type="helix" evidence="22">
    <location>
        <begin position="160"/>
        <end position="244"/>
    </location>
</feature>
<feature type="helix" evidence="22">
    <location>
        <begin position="247"/>
        <end position="258"/>
    </location>
</feature>
<feature type="strand" evidence="22">
    <location>
        <begin position="261"/>
        <end position="263"/>
    </location>
</feature>
<feature type="strand" evidence="23">
    <location>
        <begin position="320"/>
        <end position="323"/>
    </location>
</feature>